<gene>
    <name evidence="1" type="primary">rplW</name>
    <name type="ordered locus">Dvul_1763</name>
</gene>
<evidence type="ECO:0000255" key="1">
    <source>
        <dbReference type="HAMAP-Rule" id="MF_01369"/>
    </source>
</evidence>
<evidence type="ECO:0000305" key="2"/>
<proteinExistence type="inferred from homology"/>
<sequence>MDYTKILIKPLISEKTTYIKELSRQVAFFVDPRANKIEIKKAVEAAFKVKVADVNVVNRKSSDRVRQGRVVGRVAGFKKAYVTLAPGEKIEFFEGV</sequence>
<accession>A1VEB4</accession>
<dbReference type="EMBL" id="CP000527">
    <property type="protein sequence ID" value="ABM28780.1"/>
    <property type="molecule type" value="Genomic_DNA"/>
</dbReference>
<dbReference type="RefSeq" id="WP_011792455.1">
    <property type="nucleotide sequence ID" value="NC_008751.1"/>
</dbReference>
<dbReference type="SMR" id="A1VEB4"/>
<dbReference type="KEGG" id="dvl:Dvul_1763"/>
<dbReference type="HOGENOM" id="CLU_037562_3_1_7"/>
<dbReference type="Proteomes" id="UP000009173">
    <property type="component" value="Chromosome"/>
</dbReference>
<dbReference type="GO" id="GO:1990904">
    <property type="term" value="C:ribonucleoprotein complex"/>
    <property type="evidence" value="ECO:0007669"/>
    <property type="project" value="UniProtKB-KW"/>
</dbReference>
<dbReference type="GO" id="GO:0005840">
    <property type="term" value="C:ribosome"/>
    <property type="evidence" value="ECO:0007669"/>
    <property type="project" value="UniProtKB-KW"/>
</dbReference>
<dbReference type="GO" id="GO:0019843">
    <property type="term" value="F:rRNA binding"/>
    <property type="evidence" value="ECO:0007669"/>
    <property type="project" value="UniProtKB-UniRule"/>
</dbReference>
<dbReference type="GO" id="GO:0003735">
    <property type="term" value="F:structural constituent of ribosome"/>
    <property type="evidence" value="ECO:0007669"/>
    <property type="project" value="InterPro"/>
</dbReference>
<dbReference type="GO" id="GO:0006412">
    <property type="term" value="P:translation"/>
    <property type="evidence" value="ECO:0007669"/>
    <property type="project" value="UniProtKB-UniRule"/>
</dbReference>
<dbReference type="Gene3D" id="3.30.70.330">
    <property type="match status" value="1"/>
</dbReference>
<dbReference type="HAMAP" id="MF_01369_B">
    <property type="entry name" value="Ribosomal_uL23_B"/>
    <property type="match status" value="1"/>
</dbReference>
<dbReference type="InterPro" id="IPR012677">
    <property type="entry name" value="Nucleotide-bd_a/b_plait_sf"/>
</dbReference>
<dbReference type="InterPro" id="IPR013025">
    <property type="entry name" value="Ribosomal_uL23-like"/>
</dbReference>
<dbReference type="InterPro" id="IPR012678">
    <property type="entry name" value="Ribosomal_uL23/eL15/eS24_sf"/>
</dbReference>
<dbReference type="InterPro" id="IPR001014">
    <property type="entry name" value="Ribosomal_uL23_CS"/>
</dbReference>
<dbReference type="NCBIfam" id="NF004363">
    <property type="entry name" value="PRK05738.2-4"/>
    <property type="match status" value="1"/>
</dbReference>
<dbReference type="PANTHER" id="PTHR11620">
    <property type="entry name" value="60S RIBOSOMAL PROTEIN L23A"/>
    <property type="match status" value="1"/>
</dbReference>
<dbReference type="Pfam" id="PF00276">
    <property type="entry name" value="Ribosomal_L23"/>
    <property type="match status" value="1"/>
</dbReference>
<dbReference type="SUPFAM" id="SSF54189">
    <property type="entry name" value="Ribosomal proteins S24e, L23 and L15e"/>
    <property type="match status" value="1"/>
</dbReference>
<dbReference type="PROSITE" id="PS00050">
    <property type="entry name" value="RIBOSOMAL_L23"/>
    <property type="match status" value="1"/>
</dbReference>
<comment type="function">
    <text evidence="1">One of the early assembly proteins it binds 23S rRNA. One of the proteins that surrounds the polypeptide exit tunnel on the outside of the ribosome. Forms the main docking site for trigger factor binding to the ribosome.</text>
</comment>
<comment type="subunit">
    <text evidence="1">Part of the 50S ribosomal subunit. Contacts protein L29, and trigger factor when it is bound to the ribosome.</text>
</comment>
<comment type="similarity">
    <text evidence="1">Belongs to the universal ribosomal protein uL23 family.</text>
</comment>
<reference key="1">
    <citation type="journal article" date="2009" name="Environ. Microbiol.">
        <title>Contribution of mobile genetic elements to Desulfovibrio vulgaris genome plasticity.</title>
        <authorList>
            <person name="Walker C.B."/>
            <person name="Stolyar S."/>
            <person name="Chivian D."/>
            <person name="Pinel N."/>
            <person name="Gabster J.A."/>
            <person name="Dehal P.S."/>
            <person name="He Z."/>
            <person name="Yang Z.K."/>
            <person name="Yen H.C."/>
            <person name="Zhou J."/>
            <person name="Wall J.D."/>
            <person name="Hazen T.C."/>
            <person name="Arkin A.P."/>
            <person name="Stahl D.A."/>
        </authorList>
    </citation>
    <scope>NUCLEOTIDE SEQUENCE [LARGE SCALE GENOMIC DNA]</scope>
    <source>
        <strain>DP4</strain>
    </source>
</reference>
<organism>
    <name type="scientific">Nitratidesulfovibrio vulgaris (strain DP4)</name>
    <name type="common">Desulfovibrio vulgaris</name>
    <dbReference type="NCBI Taxonomy" id="391774"/>
    <lineage>
        <taxon>Bacteria</taxon>
        <taxon>Pseudomonadati</taxon>
        <taxon>Thermodesulfobacteriota</taxon>
        <taxon>Desulfovibrionia</taxon>
        <taxon>Desulfovibrionales</taxon>
        <taxon>Desulfovibrionaceae</taxon>
        <taxon>Nitratidesulfovibrio</taxon>
    </lineage>
</organism>
<keyword id="KW-0687">Ribonucleoprotein</keyword>
<keyword id="KW-0689">Ribosomal protein</keyword>
<keyword id="KW-0694">RNA-binding</keyword>
<keyword id="KW-0699">rRNA-binding</keyword>
<name>RL23_NITV4</name>
<protein>
    <recommendedName>
        <fullName evidence="1">Large ribosomal subunit protein uL23</fullName>
    </recommendedName>
    <alternativeName>
        <fullName evidence="2">50S ribosomal protein L23</fullName>
    </alternativeName>
</protein>
<feature type="chain" id="PRO_1000068076" description="Large ribosomal subunit protein uL23">
    <location>
        <begin position="1"/>
        <end position="96"/>
    </location>
</feature>